<protein>
    <recommendedName>
        <fullName>Protein YIF1B</fullName>
    </recommendedName>
    <alternativeName>
        <fullName>YIP1-interacting factor homolog B</fullName>
    </alternativeName>
</protein>
<accession>Q6P301</accession>
<name>YIF1B_XENTR</name>
<sequence length="300" mass="33313">MNQESSFRAPPKRRVRGPNPNISTPHQLFDDTSGGPVPHGGEYPNHSSPALGIPAQAFLSEPMSNFAMAYGSSLASQGKEMMDKNIDRIIPVSKIKYYFAVDTVYVGKKIGLLMFPYMHQDWEVRYQQDTPVAPRFDINAPDLYIPVMAFITYILVAGLALGTQSRFSPEILGMQASSALAWLIVEVLAILLSLYLVTVNTDLTTVDLVAFSGYKYVGMISGVISGLLFGKTGYYVVLSWCGISVVFFMIRTLRLKILSEAAAEGVLVRGARNQLRMYLTMAIAAVQPIFMYWLTYHLVR</sequence>
<keyword id="KW-0256">Endoplasmic reticulum</keyword>
<keyword id="KW-0333">Golgi apparatus</keyword>
<keyword id="KW-0472">Membrane</keyword>
<keyword id="KW-0653">Protein transport</keyword>
<keyword id="KW-1185">Reference proteome</keyword>
<keyword id="KW-0812">Transmembrane</keyword>
<keyword id="KW-1133">Transmembrane helix</keyword>
<keyword id="KW-0813">Transport</keyword>
<dbReference type="EMBL" id="BC064233">
    <property type="protein sequence ID" value="AAH64233.1"/>
    <property type="molecule type" value="mRNA"/>
</dbReference>
<dbReference type="RefSeq" id="NP_989282.1">
    <property type="nucleotide sequence ID" value="NM_203951.1"/>
</dbReference>
<dbReference type="FunCoup" id="Q6P301">
    <property type="interactions" value="2030"/>
</dbReference>
<dbReference type="STRING" id="8364.ENSXETP00000012761"/>
<dbReference type="PaxDb" id="8364-ENSXETP00000000297"/>
<dbReference type="DNASU" id="394896"/>
<dbReference type="GeneID" id="394896"/>
<dbReference type="KEGG" id="xtr:394896"/>
<dbReference type="AGR" id="Xenbase:XB-GENE-922881"/>
<dbReference type="CTD" id="90522"/>
<dbReference type="Xenbase" id="XB-GENE-922881">
    <property type="gene designation" value="yif1b"/>
</dbReference>
<dbReference type="eggNOG" id="KOG3094">
    <property type="taxonomic scope" value="Eukaryota"/>
</dbReference>
<dbReference type="InParanoid" id="Q6P301"/>
<dbReference type="OMA" id="SGYKFVH"/>
<dbReference type="OrthoDB" id="337750at2759"/>
<dbReference type="PhylomeDB" id="Q6P301"/>
<dbReference type="Proteomes" id="UP000008143">
    <property type="component" value="Chromosome 8"/>
</dbReference>
<dbReference type="Bgee" id="ENSXETG00000000151">
    <property type="expression patterns" value="Expressed in neurula embryo and 14 other cell types or tissues"/>
</dbReference>
<dbReference type="GO" id="GO:0005783">
    <property type="term" value="C:endoplasmic reticulum"/>
    <property type="evidence" value="ECO:0000250"/>
    <property type="project" value="UniProtKB"/>
</dbReference>
<dbReference type="GO" id="GO:0005789">
    <property type="term" value="C:endoplasmic reticulum membrane"/>
    <property type="evidence" value="ECO:0007669"/>
    <property type="project" value="UniProtKB-SubCell"/>
</dbReference>
<dbReference type="GO" id="GO:0005793">
    <property type="term" value="C:endoplasmic reticulum-Golgi intermediate compartment"/>
    <property type="evidence" value="ECO:0000250"/>
    <property type="project" value="UniProtKB"/>
</dbReference>
<dbReference type="GO" id="GO:0033116">
    <property type="term" value="C:endoplasmic reticulum-Golgi intermediate compartment membrane"/>
    <property type="evidence" value="ECO:0007669"/>
    <property type="project" value="UniProtKB-SubCell"/>
</dbReference>
<dbReference type="GO" id="GO:0005794">
    <property type="term" value="C:Golgi apparatus"/>
    <property type="evidence" value="ECO:0000250"/>
    <property type="project" value="UniProtKB"/>
</dbReference>
<dbReference type="GO" id="GO:0000139">
    <property type="term" value="C:Golgi membrane"/>
    <property type="evidence" value="ECO:0007669"/>
    <property type="project" value="UniProtKB-SubCell"/>
</dbReference>
<dbReference type="GO" id="GO:0060271">
    <property type="term" value="P:cilium assembly"/>
    <property type="evidence" value="ECO:0000250"/>
    <property type="project" value="UniProtKB"/>
</dbReference>
<dbReference type="GO" id="GO:0006888">
    <property type="term" value="P:endoplasmic reticulum to Golgi vesicle-mediated transport"/>
    <property type="evidence" value="ECO:0000250"/>
    <property type="project" value="UniProtKB"/>
</dbReference>
<dbReference type="GO" id="GO:0015031">
    <property type="term" value="P:protein transport"/>
    <property type="evidence" value="ECO:0007669"/>
    <property type="project" value="UniProtKB-KW"/>
</dbReference>
<dbReference type="GO" id="GO:0120316">
    <property type="term" value="P:sperm flagellum assembly"/>
    <property type="evidence" value="ECO:0000250"/>
    <property type="project" value="UniProtKB"/>
</dbReference>
<dbReference type="InterPro" id="IPR005578">
    <property type="entry name" value="Yif1_fam"/>
</dbReference>
<dbReference type="PANTHER" id="PTHR14083:SF1">
    <property type="entry name" value="PROTEIN YIF1B"/>
    <property type="match status" value="1"/>
</dbReference>
<dbReference type="PANTHER" id="PTHR14083">
    <property type="entry name" value="YIP1 INTERACTING FACTOR HOMOLOG YIF1 PROTEIN"/>
    <property type="match status" value="1"/>
</dbReference>
<dbReference type="Pfam" id="PF03878">
    <property type="entry name" value="YIF1"/>
    <property type="match status" value="1"/>
</dbReference>
<comment type="function">
    <text evidence="2 3">Functions in endoplasmic reticulum to Golgi vesicle-mediated transport and regulates the proper organization of the endoplasmic reticulum and the Golgi (By similarity). Plays a key role in targeting to neuronal dendrites receptors such as HTR1A (By similarity). Plays also a role in primary cilium and sperm flagellum assembly probably through protein transport to these compartments (By similarity).</text>
</comment>
<comment type="subcellular location">
    <subcellularLocation>
        <location evidence="1">Endoplasmic reticulum membrane</location>
        <topology evidence="4">Multi-pass membrane protein</topology>
    </subcellularLocation>
    <subcellularLocation>
        <location evidence="1">Golgi apparatus membrane</location>
        <topology evidence="4">Multi-pass membrane protein</topology>
    </subcellularLocation>
    <subcellularLocation>
        <location evidence="1">Endoplasmic reticulum-Golgi intermediate compartment membrane</location>
        <topology evidence="4">Multi-pass membrane protein</topology>
    </subcellularLocation>
    <text evidence="1">Shuttles between the endoplasmic reticulum, the intermediate compartment and the Golgi apparatus.</text>
</comment>
<comment type="similarity">
    <text evidence="6">Belongs to the YIF1 family.</text>
</comment>
<evidence type="ECO:0000250" key="1">
    <source>
        <dbReference type="UniProtKB" id="Q5BJH7"/>
    </source>
</evidence>
<evidence type="ECO:0000250" key="2">
    <source>
        <dbReference type="UniProtKB" id="Q6PEC3"/>
    </source>
</evidence>
<evidence type="ECO:0000250" key="3">
    <source>
        <dbReference type="UniProtKB" id="Q9CX30"/>
    </source>
</evidence>
<evidence type="ECO:0000255" key="4"/>
<evidence type="ECO:0000256" key="5">
    <source>
        <dbReference type="SAM" id="MobiDB-lite"/>
    </source>
</evidence>
<evidence type="ECO:0000305" key="6"/>
<gene>
    <name type="primary">yif1b</name>
</gene>
<feature type="chain" id="PRO_0000307264" description="Protein YIF1B">
    <location>
        <begin position="1"/>
        <end position="300"/>
    </location>
</feature>
<feature type="topological domain" description="Cytoplasmic" evidence="4">
    <location>
        <begin position="1"/>
        <end position="142"/>
    </location>
</feature>
<feature type="transmembrane region" description="Helical" evidence="4">
    <location>
        <begin position="143"/>
        <end position="163"/>
    </location>
</feature>
<feature type="topological domain" description="Extracellular" evidence="4">
    <location>
        <begin position="164"/>
        <end position="178"/>
    </location>
</feature>
<feature type="transmembrane region" description="Helical" evidence="4">
    <location>
        <begin position="179"/>
        <end position="199"/>
    </location>
</feature>
<feature type="topological domain" description="Cytoplasmic" evidence="4">
    <location>
        <begin position="200"/>
        <end position="205"/>
    </location>
</feature>
<feature type="transmembrane region" description="Helical" evidence="4">
    <location>
        <begin position="206"/>
        <end position="226"/>
    </location>
</feature>
<feature type="topological domain" description="Extracellular" evidence="4">
    <location>
        <position position="227"/>
    </location>
</feature>
<feature type="transmembrane region" description="Helical" evidence="4">
    <location>
        <begin position="228"/>
        <end position="248"/>
    </location>
</feature>
<feature type="topological domain" description="Cytoplasmic" evidence="4">
    <location>
        <begin position="249"/>
        <end position="278"/>
    </location>
</feature>
<feature type="transmembrane region" description="Helical" evidence="4">
    <location>
        <begin position="279"/>
        <end position="299"/>
    </location>
</feature>
<feature type="topological domain" description="Extracellular" evidence="4">
    <location>
        <position position="300"/>
    </location>
</feature>
<feature type="region of interest" description="Disordered" evidence="5">
    <location>
        <begin position="1"/>
        <end position="46"/>
    </location>
</feature>
<organism>
    <name type="scientific">Xenopus tropicalis</name>
    <name type="common">Western clawed frog</name>
    <name type="synonym">Silurana tropicalis</name>
    <dbReference type="NCBI Taxonomy" id="8364"/>
    <lineage>
        <taxon>Eukaryota</taxon>
        <taxon>Metazoa</taxon>
        <taxon>Chordata</taxon>
        <taxon>Craniata</taxon>
        <taxon>Vertebrata</taxon>
        <taxon>Euteleostomi</taxon>
        <taxon>Amphibia</taxon>
        <taxon>Batrachia</taxon>
        <taxon>Anura</taxon>
        <taxon>Pipoidea</taxon>
        <taxon>Pipidae</taxon>
        <taxon>Xenopodinae</taxon>
        <taxon>Xenopus</taxon>
        <taxon>Silurana</taxon>
    </lineage>
</organism>
<proteinExistence type="evidence at transcript level"/>
<reference key="1">
    <citation type="submission" date="2003-12" db="EMBL/GenBank/DDBJ databases">
        <authorList>
            <consortium name="NIH - Xenopus Gene Collection (XGC) project"/>
        </authorList>
    </citation>
    <scope>NUCLEOTIDE SEQUENCE [LARGE SCALE MRNA]</scope>
    <source>
        <tissue>Embryo</tissue>
    </source>
</reference>